<organism>
    <name type="scientific">Photobacterium profundum (strain SS9)</name>
    <dbReference type="NCBI Taxonomy" id="298386"/>
    <lineage>
        <taxon>Bacteria</taxon>
        <taxon>Pseudomonadati</taxon>
        <taxon>Pseudomonadota</taxon>
        <taxon>Gammaproteobacteria</taxon>
        <taxon>Vibrionales</taxon>
        <taxon>Vibrionaceae</taxon>
        <taxon>Photobacterium</taxon>
    </lineage>
</organism>
<accession>Q6LV25</accession>
<reference key="1">
    <citation type="journal article" date="2005" name="Science">
        <title>Life at depth: Photobacterium profundum genome sequence and expression analysis.</title>
        <authorList>
            <person name="Vezzi A."/>
            <person name="Campanaro S."/>
            <person name="D'Angelo M."/>
            <person name="Simonato F."/>
            <person name="Vitulo N."/>
            <person name="Lauro F.M."/>
            <person name="Cestaro A."/>
            <person name="Malacrida G."/>
            <person name="Simionati B."/>
            <person name="Cannata N."/>
            <person name="Romualdi C."/>
            <person name="Bartlett D.H."/>
            <person name="Valle G."/>
        </authorList>
    </citation>
    <scope>NUCLEOTIDE SEQUENCE [LARGE SCALE GENOMIC DNA]</scope>
    <source>
        <strain>ATCC BAA-1253 / SS9</strain>
    </source>
</reference>
<feature type="chain" id="PRO_0000083720" description="3-isopropylmalate dehydrogenase">
    <location>
        <begin position="1"/>
        <end position="362"/>
    </location>
</feature>
<feature type="binding site" evidence="1">
    <location>
        <begin position="78"/>
        <end position="91"/>
    </location>
    <ligand>
        <name>NAD(+)</name>
        <dbReference type="ChEBI" id="CHEBI:57540"/>
    </ligand>
</feature>
<feature type="binding site" evidence="1">
    <location>
        <position position="99"/>
    </location>
    <ligand>
        <name>substrate</name>
    </ligand>
</feature>
<feature type="binding site" evidence="1">
    <location>
        <position position="109"/>
    </location>
    <ligand>
        <name>substrate</name>
    </ligand>
</feature>
<feature type="binding site" evidence="1">
    <location>
        <position position="138"/>
    </location>
    <ligand>
        <name>substrate</name>
    </ligand>
</feature>
<feature type="binding site" evidence="1">
    <location>
        <position position="227"/>
    </location>
    <ligand>
        <name>Mg(2+)</name>
        <dbReference type="ChEBI" id="CHEBI:18420"/>
    </ligand>
</feature>
<feature type="binding site" evidence="1">
    <location>
        <position position="227"/>
    </location>
    <ligand>
        <name>substrate</name>
    </ligand>
</feature>
<feature type="binding site" evidence="1">
    <location>
        <position position="251"/>
    </location>
    <ligand>
        <name>Mg(2+)</name>
        <dbReference type="ChEBI" id="CHEBI:18420"/>
    </ligand>
</feature>
<feature type="binding site" evidence="1">
    <location>
        <position position="255"/>
    </location>
    <ligand>
        <name>Mg(2+)</name>
        <dbReference type="ChEBI" id="CHEBI:18420"/>
    </ligand>
</feature>
<feature type="binding site" evidence="1">
    <location>
        <begin position="285"/>
        <end position="297"/>
    </location>
    <ligand>
        <name>NAD(+)</name>
        <dbReference type="ChEBI" id="CHEBI:57540"/>
    </ligand>
</feature>
<feature type="site" description="Important for catalysis" evidence="1">
    <location>
        <position position="145"/>
    </location>
</feature>
<feature type="site" description="Important for catalysis" evidence="1">
    <location>
        <position position="195"/>
    </location>
</feature>
<evidence type="ECO:0000255" key="1">
    <source>
        <dbReference type="HAMAP-Rule" id="MF_01033"/>
    </source>
</evidence>
<proteinExistence type="inferred from homology"/>
<keyword id="KW-0028">Amino-acid biosynthesis</keyword>
<keyword id="KW-0100">Branched-chain amino acid biosynthesis</keyword>
<keyword id="KW-0963">Cytoplasm</keyword>
<keyword id="KW-0432">Leucine biosynthesis</keyword>
<keyword id="KW-0460">Magnesium</keyword>
<keyword id="KW-0464">Manganese</keyword>
<keyword id="KW-0479">Metal-binding</keyword>
<keyword id="KW-0520">NAD</keyword>
<keyword id="KW-0560">Oxidoreductase</keyword>
<keyword id="KW-1185">Reference proteome</keyword>
<sequence length="362" mass="39453">MAGTYKIAVLPGDGIGPEVMLQAHKVLDAVEEKFGFTLERSEHDVGGIAIDNHGCPLPESTMKGCEESDAILFGSVGGPKWEHLAPNDQPERGALLPLRKHFQLFCNLRPAQIHSGLEGFSPLRADISERGFDIVVVRELTGGIYFGQPKGREGEGPQEKAYDTEIYHRYEIERIARIAFESAMLREKNVYSIDKANVLQSSILWREVVEEVAKDYPEVTLNHMYIDNATMQLIKDPSQFDVMLCSNIFGDIISDECAMITGSMGMLPSASLNQEKFGMYEPAGGSAPDIAGKNIANPVAQILSAALMLRYSLDEEKAARAIEQAVSQALEAGELTADLAGKGAALSTSEMGDKIAAYIRQA</sequence>
<gene>
    <name evidence="1" type="primary">leuB</name>
    <name type="ordered locus">PBPRA0418</name>
</gene>
<name>LEU3_PHOPR</name>
<protein>
    <recommendedName>
        <fullName evidence="1">3-isopropylmalate dehydrogenase</fullName>
        <ecNumber evidence="1">1.1.1.85</ecNumber>
    </recommendedName>
    <alternativeName>
        <fullName evidence="1">3-IPM-DH</fullName>
    </alternativeName>
    <alternativeName>
        <fullName evidence="1">Beta-IPM dehydrogenase</fullName>
        <shortName evidence="1">IMDH</shortName>
    </alternativeName>
</protein>
<comment type="function">
    <text evidence="1">Catalyzes the oxidation of 3-carboxy-2-hydroxy-4-methylpentanoate (3-isopropylmalate) to 3-carboxy-4-methyl-2-oxopentanoate. The product decarboxylates to 4-methyl-2 oxopentanoate.</text>
</comment>
<comment type="catalytic activity">
    <reaction evidence="1">
        <text>(2R,3S)-3-isopropylmalate + NAD(+) = 4-methyl-2-oxopentanoate + CO2 + NADH</text>
        <dbReference type="Rhea" id="RHEA:32271"/>
        <dbReference type="ChEBI" id="CHEBI:16526"/>
        <dbReference type="ChEBI" id="CHEBI:17865"/>
        <dbReference type="ChEBI" id="CHEBI:35121"/>
        <dbReference type="ChEBI" id="CHEBI:57540"/>
        <dbReference type="ChEBI" id="CHEBI:57945"/>
        <dbReference type="EC" id="1.1.1.85"/>
    </reaction>
</comment>
<comment type="cofactor">
    <cofactor evidence="1">
        <name>Mg(2+)</name>
        <dbReference type="ChEBI" id="CHEBI:18420"/>
    </cofactor>
    <cofactor evidence="1">
        <name>Mn(2+)</name>
        <dbReference type="ChEBI" id="CHEBI:29035"/>
    </cofactor>
    <text evidence="1">Binds 1 Mg(2+) or Mn(2+) ion per subunit.</text>
</comment>
<comment type="pathway">
    <text evidence="1">Amino-acid biosynthesis; L-leucine biosynthesis; L-leucine from 3-methyl-2-oxobutanoate: step 3/4.</text>
</comment>
<comment type="subunit">
    <text evidence="1">Homodimer.</text>
</comment>
<comment type="subcellular location">
    <subcellularLocation>
        <location evidence="1">Cytoplasm</location>
    </subcellularLocation>
</comment>
<comment type="similarity">
    <text evidence="1">Belongs to the isocitrate and isopropylmalate dehydrogenases family. LeuB type 1 subfamily.</text>
</comment>
<dbReference type="EC" id="1.1.1.85" evidence="1"/>
<dbReference type="EMBL" id="CR378664">
    <property type="protein sequence ID" value="CAG18850.1"/>
    <property type="molecule type" value="Genomic_DNA"/>
</dbReference>
<dbReference type="RefSeq" id="WP_011217207.1">
    <property type="nucleotide sequence ID" value="NC_006370.1"/>
</dbReference>
<dbReference type="SMR" id="Q6LV25"/>
<dbReference type="STRING" id="298386.PBPRA0418"/>
<dbReference type="KEGG" id="ppr:PBPRA0418"/>
<dbReference type="eggNOG" id="COG0473">
    <property type="taxonomic scope" value="Bacteria"/>
</dbReference>
<dbReference type="HOGENOM" id="CLU_031953_0_3_6"/>
<dbReference type="UniPathway" id="UPA00048">
    <property type="reaction ID" value="UER00072"/>
</dbReference>
<dbReference type="Proteomes" id="UP000000593">
    <property type="component" value="Chromosome 1"/>
</dbReference>
<dbReference type="GO" id="GO:0005829">
    <property type="term" value="C:cytosol"/>
    <property type="evidence" value="ECO:0007669"/>
    <property type="project" value="TreeGrafter"/>
</dbReference>
<dbReference type="GO" id="GO:0003862">
    <property type="term" value="F:3-isopropylmalate dehydrogenase activity"/>
    <property type="evidence" value="ECO:0007669"/>
    <property type="project" value="UniProtKB-UniRule"/>
</dbReference>
<dbReference type="GO" id="GO:0000287">
    <property type="term" value="F:magnesium ion binding"/>
    <property type="evidence" value="ECO:0007669"/>
    <property type="project" value="InterPro"/>
</dbReference>
<dbReference type="GO" id="GO:0051287">
    <property type="term" value="F:NAD binding"/>
    <property type="evidence" value="ECO:0007669"/>
    <property type="project" value="InterPro"/>
</dbReference>
<dbReference type="GO" id="GO:0009098">
    <property type="term" value="P:L-leucine biosynthetic process"/>
    <property type="evidence" value="ECO:0007669"/>
    <property type="project" value="UniProtKB-UniRule"/>
</dbReference>
<dbReference type="FunFam" id="3.40.718.10:FF:000004">
    <property type="entry name" value="3-isopropylmalate dehydrogenase"/>
    <property type="match status" value="1"/>
</dbReference>
<dbReference type="Gene3D" id="3.40.718.10">
    <property type="entry name" value="Isopropylmalate Dehydrogenase"/>
    <property type="match status" value="1"/>
</dbReference>
<dbReference type="HAMAP" id="MF_01033">
    <property type="entry name" value="LeuB_type1"/>
    <property type="match status" value="1"/>
</dbReference>
<dbReference type="InterPro" id="IPR019818">
    <property type="entry name" value="IsoCit/isopropylmalate_DH_CS"/>
</dbReference>
<dbReference type="InterPro" id="IPR024084">
    <property type="entry name" value="IsoPropMal-DH-like_dom"/>
</dbReference>
<dbReference type="InterPro" id="IPR004429">
    <property type="entry name" value="Isopropylmalate_DH"/>
</dbReference>
<dbReference type="NCBIfam" id="TIGR00169">
    <property type="entry name" value="leuB"/>
    <property type="match status" value="1"/>
</dbReference>
<dbReference type="PANTHER" id="PTHR42979">
    <property type="entry name" value="3-ISOPROPYLMALATE DEHYDROGENASE"/>
    <property type="match status" value="1"/>
</dbReference>
<dbReference type="PANTHER" id="PTHR42979:SF1">
    <property type="entry name" value="3-ISOPROPYLMALATE DEHYDROGENASE"/>
    <property type="match status" value="1"/>
</dbReference>
<dbReference type="Pfam" id="PF00180">
    <property type="entry name" value="Iso_dh"/>
    <property type="match status" value="1"/>
</dbReference>
<dbReference type="SMART" id="SM01329">
    <property type="entry name" value="Iso_dh"/>
    <property type="match status" value="1"/>
</dbReference>
<dbReference type="SUPFAM" id="SSF53659">
    <property type="entry name" value="Isocitrate/Isopropylmalate dehydrogenase-like"/>
    <property type="match status" value="1"/>
</dbReference>
<dbReference type="PROSITE" id="PS00470">
    <property type="entry name" value="IDH_IMDH"/>
    <property type="match status" value="1"/>
</dbReference>